<keyword id="KW-0687">Ribonucleoprotein</keyword>
<keyword id="KW-0689">Ribosomal protein</keyword>
<keyword id="KW-0694">RNA-binding</keyword>
<keyword id="KW-0699">rRNA-binding</keyword>
<proteinExistence type="inferred from homology"/>
<organism>
    <name type="scientific">Vibrio vulnificus (strain CMCP6)</name>
    <dbReference type="NCBI Taxonomy" id="216895"/>
    <lineage>
        <taxon>Bacteria</taxon>
        <taxon>Pseudomonadati</taxon>
        <taxon>Pseudomonadota</taxon>
        <taxon>Gammaproteobacteria</taxon>
        <taxon>Vibrionales</taxon>
        <taxon>Vibrionaceae</taxon>
        <taxon>Vibrio</taxon>
    </lineage>
</organism>
<reference key="1">
    <citation type="submission" date="2002-12" db="EMBL/GenBank/DDBJ databases">
        <title>Complete genome sequence of Vibrio vulnificus CMCP6.</title>
        <authorList>
            <person name="Rhee J.H."/>
            <person name="Kim S.Y."/>
            <person name="Chung S.S."/>
            <person name="Kim J.J."/>
            <person name="Moon Y.H."/>
            <person name="Jeong H."/>
            <person name="Choy H.E."/>
        </authorList>
    </citation>
    <scope>NUCLEOTIDE SEQUENCE [LARGE SCALE GENOMIC DNA]</scope>
    <source>
        <strain>CMCP6</strain>
    </source>
</reference>
<comment type="function">
    <text evidence="1">One of the primary rRNA binding proteins, it binds specifically to the 5'-end of 16S ribosomal RNA.</text>
</comment>
<comment type="subunit">
    <text evidence="1">Part of the 30S ribosomal subunit.</text>
</comment>
<comment type="similarity">
    <text evidence="1">Belongs to the universal ribosomal protein uS17 family.</text>
</comment>
<protein>
    <recommendedName>
        <fullName evidence="1">Small ribosomal subunit protein uS17</fullName>
    </recommendedName>
    <alternativeName>
        <fullName evidence="2">30S ribosomal protein S17</fullName>
    </alternativeName>
</protein>
<dbReference type="EMBL" id="AE016795">
    <property type="protein sequence ID" value="AAO09261.1"/>
    <property type="molecule type" value="Genomic_DNA"/>
</dbReference>
<dbReference type="RefSeq" id="WP_011078824.1">
    <property type="nucleotide sequence ID" value="NC_004459.3"/>
</dbReference>
<dbReference type="SMR" id="Q8DE48"/>
<dbReference type="GeneID" id="43685300"/>
<dbReference type="KEGG" id="vvu:VV1_0753"/>
<dbReference type="HOGENOM" id="CLU_073626_1_1_6"/>
<dbReference type="Proteomes" id="UP000002275">
    <property type="component" value="Chromosome 1"/>
</dbReference>
<dbReference type="GO" id="GO:0022627">
    <property type="term" value="C:cytosolic small ribosomal subunit"/>
    <property type="evidence" value="ECO:0007669"/>
    <property type="project" value="TreeGrafter"/>
</dbReference>
<dbReference type="GO" id="GO:0019843">
    <property type="term" value="F:rRNA binding"/>
    <property type="evidence" value="ECO:0007669"/>
    <property type="project" value="UniProtKB-UniRule"/>
</dbReference>
<dbReference type="GO" id="GO:0003735">
    <property type="term" value="F:structural constituent of ribosome"/>
    <property type="evidence" value="ECO:0007669"/>
    <property type="project" value="InterPro"/>
</dbReference>
<dbReference type="GO" id="GO:0006412">
    <property type="term" value="P:translation"/>
    <property type="evidence" value="ECO:0007669"/>
    <property type="project" value="UniProtKB-UniRule"/>
</dbReference>
<dbReference type="CDD" id="cd00364">
    <property type="entry name" value="Ribosomal_uS17"/>
    <property type="match status" value="1"/>
</dbReference>
<dbReference type="FunFam" id="2.40.50.140:FF:000014">
    <property type="entry name" value="30S ribosomal protein S17"/>
    <property type="match status" value="1"/>
</dbReference>
<dbReference type="Gene3D" id="2.40.50.140">
    <property type="entry name" value="Nucleic acid-binding proteins"/>
    <property type="match status" value="1"/>
</dbReference>
<dbReference type="HAMAP" id="MF_01345_B">
    <property type="entry name" value="Ribosomal_uS17_B"/>
    <property type="match status" value="1"/>
</dbReference>
<dbReference type="InterPro" id="IPR012340">
    <property type="entry name" value="NA-bd_OB-fold"/>
</dbReference>
<dbReference type="InterPro" id="IPR000266">
    <property type="entry name" value="Ribosomal_uS17"/>
</dbReference>
<dbReference type="InterPro" id="IPR019984">
    <property type="entry name" value="Ribosomal_uS17_bact/chlr"/>
</dbReference>
<dbReference type="InterPro" id="IPR019979">
    <property type="entry name" value="Ribosomal_uS17_CS"/>
</dbReference>
<dbReference type="NCBIfam" id="NF004123">
    <property type="entry name" value="PRK05610.1"/>
    <property type="match status" value="1"/>
</dbReference>
<dbReference type="NCBIfam" id="TIGR03635">
    <property type="entry name" value="uS17_bact"/>
    <property type="match status" value="1"/>
</dbReference>
<dbReference type="PANTHER" id="PTHR10744">
    <property type="entry name" value="40S RIBOSOMAL PROTEIN S11 FAMILY MEMBER"/>
    <property type="match status" value="1"/>
</dbReference>
<dbReference type="PANTHER" id="PTHR10744:SF1">
    <property type="entry name" value="SMALL RIBOSOMAL SUBUNIT PROTEIN US17M"/>
    <property type="match status" value="1"/>
</dbReference>
<dbReference type="Pfam" id="PF00366">
    <property type="entry name" value="Ribosomal_S17"/>
    <property type="match status" value="1"/>
</dbReference>
<dbReference type="PRINTS" id="PR00973">
    <property type="entry name" value="RIBOSOMALS17"/>
</dbReference>
<dbReference type="SUPFAM" id="SSF50249">
    <property type="entry name" value="Nucleic acid-binding proteins"/>
    <property type="match status" value="1"/>
</dbReference>
<dbReference type="PROSITE" id="PS00056">
    <property type="entry name" value="RIBOSOMAL_S17"/>
    <property type="match status" value="1"/>
</dbReference>
<feature type="chain" id="PRO_0000233606" description="Small ribosomal subunit protein uS17">
    <location>
        <begin position="1"/>
        <end position="84"/>
    </location>
</feature>
<gene>
    <name evidence="1" type="primary">rpsQ</name>
    <name type="ordered locus">VV1_0753</name>
</gene>
<evidence type="ECO:0000255" key="1">
    <source>
        <dbReference type="HAMAP-Rule" id="MF_01345"/>
    </source>
</evidence>
<evidence type="ECO:0000305" key="2"/>
<accession>Q8DE48</accession>
<name>RS17_VIBVU</name>
<sequence length="84" mass="9607">MSDKIRTQLGRVVSDKMDKSIVVAIERMVKHPIYGKFVKRTTKVHAHDENNECGIGDTVEIRECRPLSKTKSWTLVKVVEKAKI</sequence>